<dbReference type="EC" id="6.1.1.6" evidence="1"/>
<dbReference type="EMBL" id="AE017220">
    <property type="protein sequence ID" value="AAX66886.1"/>
    <property type="molecule type" value="Genomic_DNA"/>
</dbReference>
<dbReference type="RefSeq" id="WP_000003339.1">
    <property type="nucleotide sequence ID" value="NC_006905.1"/>
</dbReference>
<dbReference type="SMR" id="Q57K76"/>
<dbReference type="KEGG" id="sec:SCH_2980"/>
<dbReference type="HOGENOM" id="CLU_008255_6_0_6"/>
<dbReference type="Proteomes" id="UP000000538">
    <property type="component" value="Chromosome"/>
</dbReference>
<dbReference type="GO" id="GO:0005829">
    <property type="term" value="C:cytosol"/>
    <property type="evidence" value="ECO:0007669"/>
    <property type="project" value="TreeGrafter"/>
</dbReference>
<dbReference type="GO" id="GO:0005524">
    <property type="term" value="F:ATP binding"/>
    <property type="evidence" value="ECO:0007669"/>
    <property type="project" value="UniProtKB-UniRule"/>
</dbReference>
<dbReference type="GO" id="GO:0004824">
    <property type="term" value="F:lysine-tRNA ligase activity"/>
    <property type="evidence" value="ECO:0007669"/>
    <property type="project" value="UniProtKB-UniRule"/>
</dbReference>
<dbReference type="GO" id="GO:0000287">
    <property type="term" value="F:magnesium ion binding"/>
    <property type="evidence" value="ECO:0007669"/>
    <property type="project" value="UniProtKB-UniRule"/>
</dbReference>
<dbReference type="GO" id="GO:0000049">
    <property type="term" value="F:tRNA binding"/>
    <property type="evidence" value="ECO:0007669"/>
    <property type="project" value="TreeGrafter"/>
</dbReference>
<dbReference type="GO" id="GO:0006430">
    <property type="term" value="P:lysyl-tRNA aminoacylation"/>
    <property type="evidence" value="ECO:0007669"/>
    <property type="project" value="UniProtKB-UniRule"/>
</dbReference>
<dbReference type="CDD" id="cd00775">
    <property type="entry name" value="LysRS_core"/>
    <property type="match status" value="1"/>
</dbReference>
<dbReference type="CDD" id="cd04322">
    <property type="entry name" value="LysRS_N"/>
    <property type="match status" value="1"/>
</dbReference>
<dbReference type="FunFam" id="2.40.50.140:FF:000024">
    <property type="entry name" value="Lysine--tRNA ligase"/>
    <property type="match status" value="1"/>
</dbReference>
<dbReference type="FunFam" id="3.30.930.10:FF:000001">
    <property type="entry name" value="Lysine--tRNA ligase"/>
    <property type="match status" value="1"/>
</dbReference>
<dbReference type="Gene3D" id="3.30.930.10">
    <property type="entry name" value="Bira Bifunctional Protein, Domain 2"/>
    <property type="match status" value="1"/>
</dbReference>
<dbReference type="Gene3D" id="2.40.50.140">
    <property type="entry name" value="Nucleic acid-binding proteins"/>
    <property type="match status" value="1"/>
</dbReference>
<dbReference type="HAMAP" id="MF_00252">
    <property type="entry name" value="Lys_tRNA_synth_class2"/>
    <property type="match status" value="1"/>
</dbReference>
<dbReference type="InterPro" id="IPR004364">
    <property type="entry name" value="Aa-tRNA-synt_II"/>
</dbReference>
<dbReference type="InterPro" id="IPR006195">
    <property type="entry name" value="aa-tRNA-synth_II"/>
</dbReference>
<dbReference type="InterPro" id="IPR045864">
    <property type="entry name" value="aa-tRNA-synth_II/BPL/LPL"/>
</dbReference>
<dbReference type="InterPro" id="IPR002313">
    <property type="entry name" value="Lys-tRNA-ligase_II"/>
</dbReference>
<dbReference type="InterPro" id="IPR034762">
    <property type="entry name" value="Lys-tRNA-ligase_II_bac/euk"/>
</dbReference>
<dbReference type="InterPro" id="IPR044136">
    <property type="entry name" value="Lys-tRNA-ligase_II_N"/>
</dbReference>
<dbReference type="InterPro" id="IPR018149">
    <property type="entry name" value="Lys-tRNA-synth_II_C"/>
</dbReference>
<dbReference type="InterPro" id="IPR012340">
    <property type="entry name" value="NA-bd_OB-fold"/>
</dbReference>
<dbReference type="InterPro" id="IPR004365">
    <property type="entry name" value="NA-bd_OB_tRNA"/>
</dbReference>
<dbReference type="NCBIfam" id="TIGR00499">
    <property type="entry name" value="lysS_bact"/>
    <property type="match status" value="1"/>
</dbReference>
<dbReference type="NCBIfam" id="NF001756">
    <property type="entry name" value="PRK00484.1"/>
    <property type="match status" value="1"/>
</dbReference>
<dbReference type="NCBIfam" id="NF009101">
    <property type="entry name" value="PRK12445.1"/>
    <property type="match status" value="1"/>
</dbReference>
<dbReference type="PANTHER" id="PTHR42918:SF15">
    <property type="entry name" value="LYSINE--TRNA LIGASE, CHLOROPLASTIC_MITOCHONDRIAL"/>
    <property type="match status" value="1"/>
</dbReference>
<dbReference type="PANTHER" id="PTHR42918">
    <property type="entry name" value="LYSYL-TRNA SYNTHETASE"/>
    <property type="match status" value="1"/>
</dbReference>
<dbReference type="Pfam" id="PF00152">
    <property type="entry name" value="tRNA-synt_2"/>
    <property type="match status" value="1"/>
</dbReference>
<dbReference type="Pfam" id="PF01336">
    <property type="entry name" value="tRNA_anti-codon"/>
    <property type="match status" value="1"/>
</dbReference>
<dbReference type="PIRSF" id="PIRSF039101">
    <property type="entry name" value="LysRS2"/>
    <property type="match status" value="1"/>
</dbReference>
<dbReference type="PRINTS" id="PR00982">
    <property type="entry name" value="TRNASYNTHLYS"/>
</dbReference>
<dbReference type="SUPFAM" id="SSF55681">
    <property type="entry name" value="Class II aaRS and biotin synthetases"/>
    <property type="match status" value="1"/>
</dbReference>
<dbReference type="SUPFAM" id="SSF50249">
    <property type="entry name" value="Nucleic acid-binding proteins"/>
    <property type="match status" value="1"/>
</dbReference>
<dbReference type="PROSITE" id="PS50862">
    <property type="entry name" value="AA_TRNA_LIGASE_II"/>
    <property type="match status" value="1"/>
</dbReference>
<sequence>MSEQNAQGADEVVDLNNEMKARREKLAALREQGIPFPNDFRRDRTSDQLHAEFDAKEAEELEALNIEVSVAGRMMTRRIMGKASFVTLQDVGGRIQLYVARDDLPEGVYNEQFKKWDLGDILGAKGKLFKTKTGELSIHCTELRLLTKALRPLPDKFHGLQDQEARYRQRYLDLISNDESRNTFKTRSKILAGIRQFMVARGFMEVETPMMQVIPGGASARPFITHHNALDLDMYLRIAPELYLKRLVVGGFERVFEINRNFRNEGISVRHNPEFTMMELYMAYADYKDLIELTESLFRTLAQDVLGTTQVPYGDEVFDFGKPFEKLTMREAIKKYRPETDMADLDNFDSAKAIAESIGIHVEKSWGLGRIVTEIFDEVAEAHLIQPTFITEYPAEVSPLARRNDVNPEITDRFEFFIGGREIGNGFSELNDAEDQAQRFLDQVNAKAAGDDEAMFYDEDYVTALEHGLPPTAGLGIGIDRMVMLFTNSHTIRDVILFPAMRPVK</sequence>
<protein>
    <recommendedName>
        <fullName evidence="1">Lysine--tRNA ligase</fullName>
        <ecNumber evidence="1">6.1.1.6</ecNumber>
    </recommendedName>
    <alternativeName>
        <fullName evidence="1">Lysyl-tRNA synthetase</fullName>
        <shortName evidence="1">LysRS</shortName>
    </alternativeName>
</protein>
<comment type="catalytic activity">
    <reaction evidence="1">
        <text>tRNA(Lys) + L-lysine + ATP = L-lysyl-tRNA(Lys) + AMP + diphosphate</text>
        <dbReference type="Rhea" id="RHEA:20792"/>
        <dbReference type="Rhea" id="RHEA-COMP:9696"/>
        <dbReference type="Rhea" id="RHEA-COMP:9697"/>
        <dbReference type="ChEBI" id="CHEBI:30616"/>
        <dbReference type="ChEBI" id="CHEBI:32551"/>
        <dbReference type="ChEBI" id="CHEBI:33019"/>
        <dbReference type="ChEBI" id="CHEBI:78442"/>
        <dbReference type="ChEBI" id="CHEBI:78529"/>
        <dbReference type="ChEBI" id="CHEBI:456215"/>
        <dbReference type="EC" id="6.1.1.6"/>
    </reaction>
</comment>
<comment type="cofactor">
    <cofactor evidence="1">
        <name>Mg(2+)</name>
        <dbReference type="ChEBI" id="CHEBI:18420"/>
    </cofactor>
    <text evidence="1">Binds 3 Mg(2+) ions per subunit.</text>
</comment>
<comment type="subunit">
    <text evidence="1">Homodimer.</text>
</comment>
<comment type="subcellular location">
    <subcellularLocation>
        <location evidence="1">Cytoplasm</location>
    </subcellularLocation>
</comment>
<comment type="similarity">
    <text evidence="1">Belongs to the class-II aminoacyl-tRNA synthetase family.</text>
</comment>
<evidence type="ECO:0000255" key="1">
    <source>
        <dbReference type="HAMAP-Rule" id="MF_00252"/>
    </source>
</evidence>
<feature type="chain" id="PRO_1000012922" description="Lysine--tRNA ligase">
    <location>
        <begin position="1"/>
        <end position="505"/>
    </location>
</feature>
<feature type="binding site" evidence="1">
    <location>
        <position position="415"/>
    </location>
    <ligand>
        <name>Mg(2+)</name>
        <dbReference type="ChEBI" id="CHEBI:18420"/>
        <label>1</label>
    </ligand>
</feature>
<feature type="binding site" evidence="1">
    <location>
        <position position="422"/>
    </location>
    <ligand>
        <name>Mg(2+)</name>
        <dbReference type="ChEBI" id="CHEBI:18420"/>
        <label>1</label>
    </ligand>
</feature>
<feature type="binding site" evidence="1">
    <location>
        <position position="422"/>
    </location>
    <ligand>
        <name>Mg(2+)</name>
        <dbReference type="ChEBI" id="CHEBI:18420"/>
        <label>2</label>
    </ligand>
</feature>
<accession>Q57K76</accession>
<organism>
    <name type="scientific">Salmonella choleraesuis (strain SC-B67)</name>
    <dbReference type="NCBI Taxonomy" id="321314"/>
    <lineage>
        <taxon>Bacteria</taxon>
        <taxon>Pseudomonadati</taxon>
        <taxon>Pseudomonadota</taxon>
        <taxon>Gammaproteobacteria</taxon>
        <taxon>Enterobacterales</taxon>
        <taxon>Enterobacteriaceae</taxon>
        <taxon>Salmonella</taxon>
    </lineage>
</organism>
<gene>
    <name evidence="1" type="primary">lysS</name>
    <name type="ordered locus">SCH_2980</name>
</gene>
<reference key="1">
    <citation type="journal article" date="2005" name="Nucleic Acids Res.">
        <title>The genome sequence of Salmonella enterica serovar Choleraesuis, a highly invasive and resistant zoonotic pathogen.</title>
        <authorList>
            <person name="Chiu C.-H."/>
            <person name="Tang P."/>
            <person name="Chu C."/>
            <person name="Hu S."/>
            <person name="Bao Q."/>
            <person name="Yu J."/>
            <person name="Chou Y.-Y."/>
            <person name="Wang H.-S."/>
            <person name="Lee Y.-S."/>
        </authorList>
    </citation>
    <scope>NUCLEOTIDE SEQUENCE [LARGE SCALE GENOMIC DNA]</scope>
    <source>
        <strain>SC-B67</strain>
    </source>
</reference>
<keyword id="KW-0030">Aminoacyl-tRNA synthetase</keyword>
<keyword id="KW-0067">ATP-binding</keyword>
<keyword id="KW-0963">Cytoplasm</keyword>
<keyword id="KW-0436">Ligase</keyword>
<keyword id="KW-0460">Magnesium</keyword>
<keyword id="KW-0479">Metal-binding</keyword>
<keyword id="KW-0547">Nucleotide-binding</keyword>
<keyword id="KW-0648">Protein biosynthesis</keyword>
<name>SYK_SALCH</name>
<proteinExistence type="inferred from homology"/>